<sequence length="270" mass="29144">MAAWAERLTGVRGVLLDISGVLCDSSASGATAIAGSVEAVARLKQSPLKVRFCTNESQKSLRELVGVLQQLGFDISEEEVTAPAPATCQILKERGLRPHLLIHEGVRSEFDDIDMSNPNCVVIADAGEAFSYQNMNRAFQVLMELENPVLISLGKGRYYKETSGLMLDVGGYMKALEYACGIKAEVVGKPSPEFFKSALQAIGVEAHQAIMIGDDIVGDVGGAQQCGMRALQVRTGKFRPGDEHHPEVQADGYVDNLAEAVDLLLKYTDK</sequence>
<proteinExistence type="evidence at protein level"/>
<feature type="chain" id="PRO_0000305075" description="Phospholysine phosphohistidine inorganic pyrophosphate phosphatase">
    <location>
        <begin position="1"/>
        <end position="270"/>
    </location>
</feature>
<feature type="binding site" evidence="1">
    <location>
        <begin position="17"/>
        <end position="19"/>
    </location>
    <ligand>
        <name>substrate</name>
    </ligand>
</feature>
<feature type="binding site" evidence="1">
    <location>
        <position position="17"/>
    </location>
    <ligand>
        <name>Mg(2+)</name>
        <dbReference type="ChEBI" id="CHEBI:18420"/>
    </ligand>
</feature>
<feature type="binding site" evidence="1">
    <location>
        <position position="19"/>
    </location>
    <ligand>
        <name>Mg(2+)</name>
        <dbReference type="ChEBI" id="CHEBI:18420"/>
    </ligand>
</feature>
<feature type="binding site" evidence="1">
    <location>
        <begin position="54"/>
        <end position="55"/>
    </location>
    <ligand>
        <name>substrate</name>
    </ligand>
</feature>
<feature type="binding site" evidence="1">
    <location>
        <position position="189"/>
    </location>
    <ligand>
        <name>substrate</name>
    </ligand>
</feature>
<feature type="binding site" evidence="1">
    <location>
        <position position="214"/>
    </location>
    <ligand>
        <name>Mg(2+)</name>
        <dbReference type="ChEBI" id="CHEBI:18420"/>
    </ligand>
</feature>
<feature type="splice variant" id="VSP_028214" description="In isoform 2." evidence="2">
    <original>GD</original>
    <variation>RC</variation>
    <location>
        <begin position="241"/>
        <end position="242"/>
    </location>
</feature>
<feature type="splice variant" id="VSP_028215" description="In isoform 2." evidence="2">
    <location>
        <begin position="243"/>
        <end position="270"/>
    </location>
</feature>
<dbReference type="EC" id="3.1.3.-"/>
<dbReference type="EC" id="3.6.1.1"/>
<dbReference type="EMBL" id="AK009207">
    <property type="protein sequence ID" value="BAB26140.1"/>
    <property type="molecule type" value="mRNA"/>
</dbReference>
<dbReference type="EMBL" id="AK140229">
    <property type="protein sequence ID" value="BAE24290.1"/>
    <property type="molecule type" value="mRNA"/>
</dbReference>
<dbReference type="EMBL" id="BC065789">
    <property type="protein sequence ID" value="AAH65789.1"/>
    <property type="molecule type" value="mRNA"/>
</dbReference>
<dbReference type="CCDS" id="CCDS21925.1">
    <molecule id="Q9D7I5-1"/>
</dbReference>
<dbReference type="RefSeq" id="NP_083885.1">
    <molecule id="Q9D7I5-1"/>
    <property type="nucleotide sequence ID" value="NM_029609.1"/>
</dbReference>
<dbReference type="SMR" id="Q9D7I5"/>
<dbReference type="FunCoup" id="Q9D7I5">
    <property type="interactions" value="1228"/>
</dbReference>
<dbReference type="STRING" id="10090.ENSMUSP00000033241"/>
<dbReference type="iPTMnet" id="Q9D7I5"/>
<dbReference type="PhosphoSitePlus" id="Q9D7I5"/>
<dbReference type="jPOST" id="Q9D7I5"/>
<dbReference type="PaxDb" id="10090-ENSMUSP00000033241"/>
<dbReference type="PeptideAtlas" id="Q9D7I5"/>
<dbReference type="ProteomicsDB" id="286193">
    <molecule id="Q9D7I5-1"/>
</dbReference>
<dbReference type="ProteomicsDB" id="286194">
    <molecule id="Q9D7I5-2"/>
</dbReference>
<dbReference type="Antibodypedia" id="1952">
    <property type="antibodies" value="121 antibodies from 24 providers"/>
</dbReference>
<dbReference type="DNASU" id="76429"/>
<dbReference type="Ensembl" id="ENSMUST00000033241.6">
    <molecule id="Q9D7I5-1"/>
    <property type="protein sequence ID" value="ENSMUSP00000033241.6"/>
    <property type="gene ID" value="ENSMUSG00000030946.14"/>
</dbReference>
<dbReference type="Ensembl" id="ENSMUST00000106170.8">
    <molecule id="Q9D7I5-2"/>
    <property type="protein sequence ID" value="ENSMUSP00000147970.2"/>
    <property type="gene ID" value="ENSMUSG00000030946.14"/>
</dbReference>
<dbReference type="GeneID" id="76429"/>
<dbReference type="KEGG" id="mmu:76429"/>
<dbReference type="UCSC" id="uc009kce.1">
    <molecule id="Q9D7I5-1"/>
    <property type="organism name" value="mouse"/>
</dbReference>
<dbReference type="AGR" id="MGI:1923679"/>
<dbReference type="CTD" id="64077"/>
<dbReference type="MGI" id="MGI:1923679">
    <property type="gene designation" value="Lhpp"/>
</dbReference>
<dbReference type="VEuPathDB" id="HostDB:ENSMUSG00000030946"/>
<dbReference type="eggNOG" id="KOG3040">
    <property type="taxonomic scope" value="Eukaryota"/>
</dbReference>
<dbReference type="GeneTree" id="ENSGT00940000159002"/>
<dbReference type="HOGENOM" id="CLU_043473_4_1_1"/>
<dbReference type="InParanoid" id="Q9D7I5"/>
<dbReference type="OMA" id="EEHIFMP"/>
<dbReference type="OrthoDB" id="426235at2759"/>
<dbReference type="PhylomeDB" id="Q9D7I5"/>
<dbReference type="TreeFam" id="TF314344"/>
<dbReference type="BRENDA" id="3.9.1.3">
    <property type="organism ID" value="3474"/>
</dbReference>
<dbReference type="Reactome" id="R-MMU-71737">
    <property type="pathway name" value="Pyrophosphate hydrolysis"/>
</dbReference>
<dbReference type="BioGRID-ORCS" id="76429">
    <property type="hits" value="1 hit in 78 CRISPR screens"/>
</dbReference>
<dbReference type="ChiTaRS" id="Lhpp">
    <property type="organism name" value="mouse"/>
</dbReference>
<dbReference type="PRO" id="PR:Q9D7I5"/>
<dbReference type="Proteomes" id="UP000000589">
    <property type="component" value="Chromosome 7"/>
</dbReference>
<dbReference type="RNAct" id="Q9D7I5">
    <property type="molecule type" value="protein"/>
</dbReference>
<dbReference type="Bgee" id="ENSMUSG00000030946">
    <property type="expression patterns" value="Expressed in lip and 223 other cell types or tissues"/>
</dbReference>
<dbReference type="ExpressionAtlas" id="Q9D7I5">
    <property type="expression patterns" value="baseline and differential"/>
</dbReference>
<dbReference type="GO" id="GO:0005829">
    <property type="term" value="C:cytosol"/>
    <property type="evidence" value="ECO:0000250"/>
    <property type="project" value="UniProtKB"/>
</dbReference>
<dbReference type="GO" id="GO:0016607">
    <property type="term" value="C:nuclear speck"/>
    <property type="evidence" value="ECO:0007669"/>
    <property type="project" value="Ensembl"/>
</dbReference>
<dbReference type="GO" id="GO:0005634">
    <property type="term" value="C:nucleus"/>
    <property type="evidence" value="ECO:0000250"/>
    <property type="project" value="UniProtKB"/>
</dbReference>
<dbReference type="GO" id="GO:0004427">
    <property type="term" value="F:inorganic diphosphate phosphatase activity"/>
    <property type="evidence" value="ECO:0000250"/>
    <property type="project" value="UniProtKB"/>
</dbReference>
<dbReference type="GO" id="GO:0046872">
    <property type="term" value="F:metal ion binding"/>
    <property type="evidence" value="ECO:0007669"/>
    <property type="project" value="UniProtKB-KW"/>
</dbReference>
<dbReference type="GO" id="GO:0016791">
    <property type="term" value="F:phosphatase activity"/>
    <property type="evidence" value="ECO:0007669"/>
    <property type="project" value="InterPro"/>
</dbReference>
<dbReference type="GO" id="GO:0042803">
    <property type="term" value="F:protein homodimerization activity"/>
    <property type="evidence" value="ECO:0007669"/>
    <property type="project" value="Ensembl"/>
</dbReference>
<dbReference type="GO" id="GO:0006796">
    <property type="term" value="P:phosphate-containing compound metabolic process"/>
    <property type="evidence" value="ECO:0000250"/>
    <property type="project" value="UniProtKB"/>
</dbReference>
<dbReference type="CDD" id="cd07509">
    <property type="entry name" value="HAD_PPase"/>
    <property type="match status" value="1"/>
</dbReference>
<dbReference type="FunFam" id="3.40.50.1000:FF:000051">
    <property type="entry name" value="Phospholysine phosphohistidine inorganic pyrophosphate phosphatase"/>
    <property type="match status" value="1"/>
</dbReference>
<dbReference type="Gene3D" id="3.40.50.1000">
    <property type="entry name" value="HAD superfamily/HAD-like"/>
    <property type="match status" value="2"/>
</dbReference>
<dbReference type="InterPro" id="IPR036412">
    <property type="entry name" value="HAD-like_sf"/>
</dbReference>
<dbReference type="InterPro" id="IPR006357">
    <property type="entry name" value="HAD-SF_hydro_IIA"/>
</dbReference>
<dbReference type="InterPro" id="IPR023214">
    <property type="entry name" value="HAD_sf"/>
</dbReference>
<dbReference type="InterPro" id="IPR006355">
    <property type="entry name" value="LHPP/HDHD2"/>
</dbReference>
<dbReference type="NCBIfam" id="TIGR01460">
    <property type="entry name" value="HAD-SF-IIA"/>
    <property type="match status" value="1"/>
</dbReference>
<dbReference type="NCBIfam" id="TIGR01458">
    <property type="entry name" value="HAD-SF-IIA-hyp3"/>
    <property type="match status" value="1"/>
</dbReference>
<dbReference type="PANTHER" id="PTHR19288">
    <property type="entry name" value="4-NITROPHENYLPHOSPHATASE-RELATED"/>
    <property type="match status" value="1"/>
</dbReference>
<dbReference type="PANTHER" id="PTHR19288:SF44">
    <property type="entry name" value="PHOSPHOLYSINE PHOSPHOHISTIDINE INORGANIC PYROPHOSPHATE PHOSPHATASE"/>
    <property type="match status" value="1"/>
</dbReference>
<dbReference type="Pfam" id="PF13344">
    <property type="entry name" value="Hydrolase_6"/>
    <property type="match status" value="1"/>
</dbReference>
<dbReference type="Pfam" id="PF13242">
    <property type="entry name" value="Hydrolase_like"/>
    <property type="match status" value="1"/>
</dbReference>
<dbReference type="SUPFAM" id="SSF56784">
    <property type="entry name" value="HAD-like"/>
    <property type="match status" value="1"/>
</dbReference>
<gene>
    <name type="primary">Lhpp</name>
</gene>
<name>LHPP_MOUSE</name>
<keyword id="KW-0025">Alternative splicing</keyword>
<keyword id="KW-0963">Cytoplasm</keyword>
<keyword id="KW-0378">Hydrolase</keyword>
<keyword id="KW-0460">Magnesium</keyword>
<keyword id="KW-0479">Metal-binding</keyword>
<keyword id="KW-0539">Nucleus</keyword>
<keyword id="KW-1185">Reference proteome</keyword>
<comment type="function">
    <text evidence="1">Phosphatase that hydrolyzes imidodiphosphate, 3-phosphohistidine and 6-phospholysine. Has broad substrate specificity and can also hydrolyze inorganic diphosphate, but with lower efficiency (By similarity).</text>
</comment>
<comment type="catalytic activity">
    <reaction>
        <text>diphosphate + H2O = 2 phosphate + H(+)</text>
        <dbReference type="Rhea" id="RHEA:24576"/>
        <dbReference type="ChEBI" id="CHEBI:15377"/>
        <dbReference type="ChEBI" id="CHEBI:15378"/>
        <dbReference type="ChEBI" id="CHEBI:33019"/>
        <dbReference type="ChEBI" id="CHEBI:43474"/>
        <dbReference type="EC" id="3.6.1.1"/>
    </reaction>
</comment>
<comment type="cofactor">
    <cofactor evidence="1">
        <name>Mg(2+)</name>
        <dbReference type="ChEBI" id="CHEBI:18420"/>
    </cofactor>
    <text evidence="1">Binds 1 Mg(2+) ion per subunit.</text>
</comment>
<comment type="subunit">
    <text evidence="1">Homodimer.</text>
</comment>
<comment type="subcellular location">
    <subcellularLocation>
        <location evidence="1">Cytoplasm</location>
    </subcellularLocation>
    <subcellularLocation>
        <location evidence="1">Nucleus</location>
    </subcellularLocation>
</comment>
<comment type="alternative products">
    <event type="alternative splicing"/>
    <isoform>
        <id>Q9D7I5-1</id>
        <name>1</name>
        <sequence type="displayed"/>
    </isoform>
    <isoform>
        <id>Q9D7I5-2</id>
        <name>2</name>
        <sequence type="described" ref="VSP_028214 VSP_028215"/>
    </isoform>
</comment>
<comment type="similarity">
    <text evidence="3">Belongs to the HAD-like hydrolase superfamily.</text>
</comment>
<protein>
    <recommendedName>
        <fullName>Phospholysine phosphohistidine inorganic pyrophosphate phosphatase</fullName>
        <ecNumber>3.1.3.-</ecNumber>
        <ecNumber>3.6.1.1</ecNumber>
    </recommendedName>
</protein>
<organism>
    <name type="scientific">Mus musculus</name>
    <name type="common">Mouse</name>
    <dbReference type="NCBI Taxonomy" id="10090"/>
    <lineage>
        <taxon>Eukaryota</taxon>
        <taxon>Metazoa</taxon>
        <taxon>Chordata</taxon>
        <taxon>Craniata</taxon>
        <taxon>Vertebrata</taxon>
        <taxon>Euteleostomi</taxon>
        <taxon>Mammalia</taxon>
        <taxon>Eutheria</taxon>
        <taxon>Euarchontoglires</taxon>
        <taxon>Glires</taxon>
        <taxon>Rodentia</taxon>
        <taxon>Myomorpha</taxon>
        <taxon>Muroidea</taxon>
        <taxon>Muridae</taxon>
        <taxon>Murinae</taxon>
        <taxon>Mus</taxon>
        <taxon>Mus</taxon>
    </lineage>
</organism>
<evidence type="ECO:0000250" key="1"/>
<evidence type="ECO:0000303" key="2">
    <source>
    </source>
</evidence>
<evidence type="ECO:0000305" key="3"/>
<reference key="1">
    <citation type="journal article" date="2005" name="Science">
        <title>The transcriptional landscape of the mammalian genome.</title>
        <authorList>
            <person name="Carninci P."/>
            <person name="Kasukawa T."/>
            <person name="Katayama S."/>
            <person name="Gough J."/>
            <person name="Frith M.C."/>
            <person name="Maeda N."/>
            <person name="Oyama R."/>
            <person name="Ravasi T."/>
            <person name="Lenhard B."/>
            <person name="Wells C."/>
            <person name="Kodzius R."/>
            <person name="Shimokawa K."/>
            <person name="Bajic V.B."/>
            <person name="Brenner S.E."/>
            <person name="Batalov S."/>
            <person name="Forrest A.R."/>
            <person name="Zavolan M."/>
            <person name="Davis M.J."/>
            <person name="Wilming L.G."/>
            <person name="Aidinis V."/>
            <person name="Allen J.E."/>
            <person name="Ambesi-Impiombato A."/>
            <person name="Apweiler R."/>
            <person name="Aturaliya R.N."/>
            <person name="Bailey T.L."/>
            <person name="Bansal M."/>
            <person name="Baxter L."/>
            <person name="Beisel K.W."/>
            <person name="Bersano T."/>
            <person name="Bono H."/>
            <person name="Chalk A.M."/>
            <person name="Chiu K.P."/>
            <person name="Choudhary V."/>
            <person name="Christoffels A."/>
            <person name="Clutterbuck D.R."/>
            <person name="Crowe M.L."/>
            <person name="Dalla E."/>
            <person name="Dalrymple B.P."/>
            <person name="de Bono B."/>
            <person name="Della Gatta G."/>
            <person name="di Bernardo D."/>
            <person name="Down T."/>
            <person name="Engstrom P."/>
            <person name="Fagiolini M."/>
            <person name="Faulkner G."/>
            <person name="Fletcher C.F."/>
            <person name="Fukushima T."/>
            <person name="Furuno M."/>
            <person name="Futaki S."/>
            <person name="Gariboldi M."/>
            <person name="Georgii-Hemming P."/>
            <person name="Gingeras T.R."/>
            <person name="Gojobori T."/>
            <person name="Green R.E."/>
            <person name="Gustincich S."/>
            <person name="Harbers M."/>
            <person name="Hayashi Y."/>
            <person name="Hensch T.K."/>
            <person name="Hirokawa N."/>
            <person name="Hill D."/>
            <person name="Huminiecki L."/>
            <person name="Iacono M."/>
            <person name="Ikeo K."/>
            <person name="Iwama A."/>
            <person name="Ishikawa T."/>
            <person name="Jakt M."/>
            <person name="Kanapin A."/>
            <person name="Katoh M."/>
            <person name="Kawasawa Y."/>
            <person name="Kelso J."/>
            <person name="Kitamura H."/>
            <person name="Kitano H."/>
            <person name="Kollias G."/>
            <person name="Krishnan S.P."/>
            <person name="Kruger A."/>
            <person name="Kummerfeld S.K."/>
            <person name="Kurochkin I.V."/>
            <person name="Lareau L.F."/>
            <person name="Lazarevic D."/>
            <person name="Lipovich L."/>
            <person name="Liu J."/>
            <person name="Liuni S."/>
            <person name="McWilliam S."/>
            <person name="Madan Babu M."/>
            <person name="Madera M."/>
            <person name="Marchionni L."/>
            <person name="Matsuda H."/>
            <person name="Matsuzawa S."/>
            <person name="Miki H."/>
            <person name="Mignone F."/>
            <person name="Miyake S."/>
            <person name="Morris K."/>
            <person name="Mottagui-Tabar S."/>
            <person name="Mulder N."/>
            <person name="Nakano N."/>
            <person name="Nakauchi H."/>
            <person name="Ng P."/>
            <person name="Nilsson R."/>
            <person name="Nishiguchi S."/>
            <person name="Nishikawa S."/>
            <person name="Nori F."/>
            <person name="Ohara O."/>
            <person name="Okazaki Y."/>
            <person name="Orlando V."/>
            <person name="Pang K.C."/>
            <person name="Pavan W.J."/>
            <person name="Pavesi G."/>
            <person name="Pesole G."/>
            <person name="Petrovsky N."/>
            <person name="Piazza S."/>
            <person name="Reed J."/>
            <person name="Reid J.F."/>
            <person name="Ring B.Z."/>
            <person name="Ringwald M."/>
            <person name="Rost B."/>
            <person name="Ruan Y."/>
            <person name="Salzberg S.L."/>
            <person name="Sandelin A."/>
            <person name="Schneider C."/>
            <person name="Schoenbach C."/>
            <person name="Sekiguchi K."/>
            <person name="Semple C.A."/>
            <person name="Seno S."/>
            <person name="Sessa L."/>
            <person name="Sheng Y."/>
            <person name="Shibata Y."/>
            <person name="Shimada H."/>
            <person name="Shimada K."/>
            <person name="Silva D."/>
            <person name="Sinclair B."/>
            <person name="Sperling S."/>
            <person name="Stupka E."/>
            <person name="Sugiura K."/>
            <person name="Sultana R."/>
            <person name="Takenaka Y."/>
            <person name="Taki K."/>
            <person name="Tammoja K."/>
            <person name="Tan S.L."/>
            <person name="Tang S."/>
            <person name="Taylor M.S."/>
            <person name="Tegner J."/>
            <person name="Teichmann S.A."/>
            <person name="Ueda H.R."/>
            <person name="van Nimwegen E."/>
            <person name="Verardo R."/>
            <person name="Wei C.L."/>
            <person name="Yagi K."/>
            <person name="Yamanishi H."/>
            <person name="Zabarovsky E."/>
            <person name="Zhu S."/>
            <person name="Zimmer A."/>
            <person name="Hide W."/>
            <person name="Bult C."/>
            <person name="Grimmond S.M."/>
            <person name="Teasdale R.D."/>
            <person name="Liu E.T."/>
            <person name="Brusic V."/>
            <person name="Quackenbush J."/>
            <person name="Wahlestedt C."/>
            <person name="Mattick J.S."/>
            <person name="Hume D.A."/>
            <person name="Kai C."/>
            <person name="Sasaki D."/>
            <person name="Tomaru Y."/>
            <person name="Fukuda S."/>
            <person name="Kanamori-Katayama M."/>
            <person name="Suzuki M."/>
            <person name="Aoki J."/>
            <person name="Arakawa T."/>
            <person name="Iida J."/>
            <person name="Imamura K."/>
            <person name="Itoh M."/>
            <person name="Kato T."/>
            <person name="Kawaji H."/>
            <person name="Kawagashira N."/>
            <person name="Kawashima T."/>
            <person name="Kojima M."/>
            <person name="Kondo S."/>
            <person name="Konno H."/>
            <person name="Nakano K."/>
            <person name="Ninomiya N."/>
            <person name="Nishio T."/>
            <person name="Okada M."/>
            <person name="Plessy C."/>
            <person name="Shibata K."/>
            <person name="Shiraki T."/>
            <person name="Suzuki S."/>
            <person name="Tagami M."/>
            <person name="Waki K."/>
            <person name="Watahiki A."/>
            <person name="Okamura-Oho Y."/>
            <person name="Suzuki H."/>
            <person name="Kawai J."/>
            <person name="Hayashizaki Y."/>
        </authorList>
    </citation>
    <scope>NUCLEOTIDE SEQUENCE [LARGE SCALE MRNA] (ISOFORM 1)</scope>
    <source>
        <strain>C57BL/6J</strain>
        <tissue>Corpora quadrigemina</tissue>
        <tissue>Tongue</tissue>
    </source>
</reference>
<reference key="2">
    <citation type="journal article" date="2004" name="Genome Res.">
        <title>The status, quality, and expansion of the NIH full-length cDNA project: the Mammalian Gene Collection (MGC).</title>
        <authorList>
            <consortium name="The MGC Project Team"/>
        </authorList>
    </citation>
    <scope>NUCLEOTIDE SEQUENCE [LARGE SCALE MRNA] (ISOFORM 2)</scope>
    <source>
        <strain>C57BL/6J</strain>
        <tissue>Mammary gland</tissue>
    </source>
</reference>
<reference key="3">
    <citation type="journal article" date="2010" name="Cell">
        <title>A tissue-specific atlas of mouse protein phosphorylation and expression.</title>
        <authorList>
            <person name="Huttlin E.L."/>
            <person name="Jedrychowski M.P."/>
            <person name="Elias J.E."/>
            <person name="Goswami T."/>
            <person name="Rad R."/>
            <person name="Beausoleil S.A."/>
            <person name="Villen J."/>
            <person name="Haas W."/>
            <person name="Sowa M.E."/>
            <person name="Gygi S.P."/>
        </authorList>
    </citation>
    <scope>IDENTIFICATION BY MASS SPECTROMETRY [LARGE SCALE ANALYSIS]</scope>
    <source>
        <tissue>Brain</tissue>
        <tissue>Brown adipose tissue</tissue>
        <tissue>Heart</tissue>
        <tissue>Kidney</tissue>
        <tissue>Liver</tissue>
        <tissue>Lung</tissue>
        <tissue>Spleen</tissue>
        <tissue>Testis</tissue>
    </source>
</reference>
<accession>Q9D7I5</accession>
<accession>Q3USP1</accession>
<accession>Q6P070</accession>